<accession>P46998</accession>
<accession>D6VW26</accession>
<comment type="subcellular location">
    <subcellularLocation>
        <location evidence="2 3">Mitochondrion membrane</location>
        <topology evidence="2 3">Multi-pass membrane protein</topology>
    </subcellularLocation>
</comment>
<comment type="induction">
    <text evidence="4">By cell wall perturbation.</text>
</comment>
<evidence type="ECO:0000255" key="1"/>
<evidence type="ECO:0000269" key="2">
    <source>
    </source>
</evidence>
<evidence type="ECO:0000269" key="3">
    <source>
    </source>
</evidence>
<evidence type="ECO:0000269" key="4">
    <source>
    </source>
</evidence>
<feature type="chain" id="PRO_0000203028" description="Mitochondrial membrane protein FMP33">
    <location>
        <begin position="1"/>
        <end position="180"/>
    </location>
</feature>
<feature type="transmembrane region" description="Helical" evidence="1">
    <location>
        <begin position="34"/>
        <end position="54"/>
    </location>
</feature>
<feature type="transmembrane region" description="Helical" evidence="1">
    <location>
        <begin position="121"/>
        <end position="141"/>
    </location>
</feature>
<feature type="transmembrane region" description="Helical" evidence="1">
    <location>
        <begin position="145"/>
        <end position="165"/>
    </location>
</feature>
<keyword id="KW-0472">Membrane</keyword>
<keyword id="KW-0496">Mitochondrion</keyword>
<keyword id="KW-1185">Reference proteome</keyword>
<keyword id="KW-0812">Transmembrane</keyword>
<keyword id="KW-1133">Transmembrane helix</keyword>
<gene>
    <name type="primary">FMP33</name>
    <name type="ordered locus">YJL161W</name>
    <name type="ORF">J0552</name>
</gene>
<organism>
    <name type="scientific">Saccharomyces cerevisiae (strain ATCC 204508 / S288c)</name>
    <name type="common">Baker's yeast</name>
    <dbReference type="NCBI Taxonomy" id="559292"/>
    <lineage>
        <taxon>Eukaryota</taxon>
        <taxon>Fungi</taxon>
        <taxon>Dikarya</taxon>
        <taxon>Ascomycota</taxon>
        <taxon>Saccharomycotina</taxon>
        <taxon>Saccharomycetes</taxon>
        <taxon>Saccharomycetales</taxon>
        <taxon>Saccharomycetaceae</taxon>
        <taxon>Saccharomyces</taxon>
    </lineage>
</organism>
<name>FMP33_YEAST</name>
<reference key="1">
    <citation type="journal article" date="1996" name="EMBO J.">
        <title>Complete nucleotide sequence of Saccharomyces cerevisiae chromosome X.</title>
        <authorList>
            <person name="Galibert F."/>
            <person name="Alexandraki D."/>
            <person name="Baur A."/>
            <person name="Boles E."/>
            <person name="Chalwatzis N."/>
            <person name="Chuat J.-C."/>
            <person name="Coster F."/>
            <person name="Cziepluch C."/>
            <person name="de Haan M."/>
            <person name="Domdey H."/>
            <person name="Durand P."/>
            <person name="Entian K.-D."/>
            <person name="Gatius M."/>
            <person name="Goffeau A."/>
            <person name="Grivell L.A."/>
            <person name="Hennemann A."/>
            <person name="Herbert C.J."/>
            <person name="Heumann K."/>
            <person name="Hilger F."/>
            <person name="Hollenberg C.P."/>
            <person name="Huang M.-E."/>
            <person name="Jacq C."/>
            <person name="Jauniaux J.-C."/>
            <person name="Katsoulou C."/>
            <person name="Kirchrath L."/>
            <person name="Kleine K."/>
            <person name="Kordes E."/>
            <person name="Koetter P."/>
            <person name="Liebl S."/>
            <person name="Louis E.J."/>
            <person name="Manus V."/>
            <person name="Mewes H.-W."/>
            <person name="Miosga T."/>
            <person name="Obermaier B."/>
            <person name="Perea J."/>
            <person name="Pohl T.M."/>
            <person name="Portetelle D."/>
            <person name="Pujol A."/>
            <person name="Purnelle B."/>
            <person name="Ramezani Rad M."/>
            <person name="Rasmussen S.W."/>
            <person name="Rose M."/>
            <person name="Rossau R."/>
            <person name="Schaaff-Gerstenschlaeger I."/>
            <person name="Smits P.H.M."/>
            <person name="Scarcez T."/>
            <person name="Soriano N."/>
            <person name="To Van D."/>
            <person name="Tzermia M."/>
            <person name="Van Broekhoven A."/>
            <person name="Vandenbol M."/>
            <person name="Wedler H."/>
            <person name="von Wettstein D."/>
            <person name="Wambutt R."/>
            <person name="Zagulski M."/>
            <person name="Zollner A."/>
            <person name="Karpfinger-Hartl L."/>
        </authorList>
    </citation>
    <scope>NUCLEOTIDE SEQUENCE [LARGE SCALE GENOMIC DNA]</scope>
    <source>
        <strain>ATCC 204508 / S288c</strain>
    </source>
</reference>
<reference key="2">
    <citation type="journal article" date="2014" name="G3 (Bethesda)">
        <title>The reference genome sequence of Saccharomyces cerevisiae: Then and now.</title>
        <authorList>
            <person name="Engel S.R."/>
            <person name="Dietrich F.S."/>
            <person name="Fisk D.G."/>
            <person name="Binkley G."/>
            <person name="Balakrishnan R."/>
            <person name="Costanzo M.C."/>
            <person name="Dwight S.S."/>
            <person name="Hitz B.C."/>
            <person name="Karra K."/>
            <person name="Nash R.S."/>
            <person name="Weng S."/>
            <person name="Wong E.D."/>
            <person name="Lloyd P."/>
            <person name="Skrzypek M.S."/>
            <person name="Miyasato S.R."/>
            <person name="Simison M."/>
            <person name="Cherry J.M."/>
        </authorList>
    </citation>
    <scope>GENOME REANNOTATION</scope>
    <source>
        <strain>ATCC 204508 / S288c</strain>
    </source>
</reference>
<reference key="3">
    <citation type="journal article" date="2003" name="Nature">
        <title>Global analysis of protein localization in budding yeast.</title>
        <authorList>
            <person name="Huh W.-K."/>
            <person name="Falvo J.V."/>
            <person name="Gerke L.C."/>
            <person name="Carroll A.S."/>
            <person name="Howson R.W."/>
            <person name="Weissman J.S."/>
            <person name="O'Shea E.K."/>
        </authorList>
    </citation>
    <scope>SUBCELLULAR LOCATION [LARGE SCALE ANALYSIS]</scope>
</reference>
<reference key="4">
    <citation type="journal article" date="2003" name="Proc. Natl. Acad. Sci. U.S.A.">
        <title>The proteome of Saccharomyces cerevisiae mitochondria.</title>
        <authorList>
            <person name="Sickmann A."/>
            <person name="Reinders J."/>
            <person name="Wagner Y."/>
            <person name="Joppich C."/>
            <person name="Zahedi R.P."/>
            <person name="Meyer H.E."/>
            <person name="Schoenfisch B."/>
            <person name="Perschil I."/>
            <person name="Chacinska A."/>
            <person name="Guiard B."/>
            <person name="Rehling P."/>
            <person name="Pfanner N."/>
            <person name="Meisinger C."/>
        </authorList>
    </citation>
    <scope>SUBCELLULAR LOCATION [LARGE SCALE ANALYSIS]</scope>
    <source>
        <strain>ATCC 76625 / YPH499</strain>
    </source>
</reference>
<reference key="5">
    <citation type="journal article" date="2004" name="Yeast">
        <title>Characterization of the transcriptional response to cell wall stress in Saccharomyces cerevisiae.</title>
        <authorList>
            <person name="Boorsma A."/>
            <person name="de Nobel H."/>
            <person name="ter Riet B."/>
            <person name="Bargmann B."/>
            <person name="Brul S."/>
            <person name="Hellingwerf K.J."/>
            <person name="Klis F.M."/>
        </authorList>
    </citation>
    <scope>INDUCTION</scope>
</reference>
<proteinExistence type="evidence at protein level"/>
<protein>
    <recommendedName>
        <fullName>Mitochondrial membrane protein FMP33</fullName>
    </recommendedName>
</protein>
<dbReference type="EMBL" id="Z49436">
    <property type="protein sequence ID" value="CAA89456.1"/>
    <property type="molecule type" value="Genomic_DNA"/>
</dbReference>
<dbReference type="EMBL" id="BK006943">
    <property type="protein sequence ID" value="DAA08642.1"/>
    <property type="molecule type" value="Genomic_DNA"/>
</dbReference>
<dbReference type="PIR" id="S56944">
    <property type="entry name" value="S56944"/>
</dbReference>
<dbReference type="RefSeq" id="NP_012374.1">
    <property type="nucleotide sequence ID" value="NM_001181594.1"/>
</dbReference>
<dbReference type="BioGRID" id="33599">
    <property type="interactions" value="32"/>
</dbReference>
<dbReference type="FunCoup" id="P46998">
    <property type="interactions" value="134"/>
</dbReference>
<dbReference type="STRING" id="4932.YJL161W"/>
<dbReference type="PaxDb" id="4932-YJL161W"/>
<dbReference type="PeptideAtlas" id="P46998"/>
<dbReference type="EnsemblFungi" id="YJL161W_mRNA">
    <property type="protein sequence ID" value="YJL161W"/>
    <property type="gene ID" value="YJL161W"/>
</dbReference>
<dbReference type="GeneID" id="853279"/>
<dbReference type="KEGG" id="sce:YJL161W"/>
<dbReference type="AGR" id="SGD:S000003697"/>
<dbReference type="SGD" id="S000003697">
    <property type="gene designation" value="FMP33"/>
</dbReference>
<dbReference type="VEuPathDB" id="FungiDB:YJL161W"/>
<dbReference type="eggNOG" id="ENOG502S82Z">
    <property type="taxonomic scope" value="Eukaryota"/>
</dbReference>
<dbReference type="HOGENOM" id="CLU_1497253_0_0_1"/>
<dbReference type="InParanoid" id="P46998"/>
<dbReference type="OMA" id="QLANMAH"/>
<dbReference type="OrthoDB" id="4053693at2759"/>
<dbReference type="BioCyc" id="YEAST:G3O-31601-MONOMER"/>
<dbReference type="BioGRID-ORCS" id="853279">
    <property type="hits" value="0 hits in 10 CRISPR screens"/>
</dbReference>
<dbReference type="PRO" id="PR:P46998"/>
<dbReference type="Proteomes" id="UP000002311">
    <property type="component" value="Chromosome X"/>
</dbReference>
<dbReference type="RNAct" id="P46998">
    <property type="molecule type" value="protein"/>
</dbReference>
<dbReference type="GO" id="GO:0031966">
    <property type="term" value="C:mitochondrial membrane"/>
    <property type="evidence" value="ECO:0007669"/>
    <property type="project" value="UniProtKB-SubCell"/>
</dbReference>
<dbReference type="GO" id="GO:0005739">
    <property type="term" value="C:mitochondrion"/>
    <property type="evidence" value="ECO:0007005"/>
    <property type="project" value="SGD"/>
</dbReference>
<sequence>MLYTRLLRHNSQFTKFSGTSPNLGSKPLFSKGNLYTSLLVTTLYGTGLACLYLESNSLNKSKEQEDPHAIAEDDIVNIVHDAPNRIFKPALDTYQEKELDLQKSDLHKVLHSLTYSDVSQFSIVWGFLIQLSSLIGNSTLGKKSILYKGSVVSVLGFPPLIYMALKLRMKQLEKAGVRFE</sequence>